<gene>
    <name type="ordered locus">MJ0629</name>
</gene>
<comment type="similarity">
    <text evidence="1">Belongs to the UPF0111 family.</text>
</comment>
<sequence length="214" mass="25428">MDVITMSIFLFERDNEKSVIDNLRLLIQMSLKSIELLKDYMNSKDEKILKEIIKIEEEGDETTKNIRINLEKAFLPNMRRELSRSAELLDETLDSLKHAAMLYELLKEEFDEYLKNEIDLVLMITVDMFQHLDRVLDVIEKGGDLDPIIKEIKDKEKFIDDVYQNRIYKYLINLEVESFWEGKILCDFIDNIVNISDYIEDVADELHIIYLHTK</sequence>
<feature type="chain" id="PRO_0000154913" description="UPF0111 protein MJ0629">
    <location>
        <begin position="1"/>
        <end position="214"/>
    </location>
</feature>
<dbReference type="EMBL" id="L77117">
    <property type="protein sequence ID" value="AAB98621.1"/>
    <property type="molecule type" value="Genomic_DNA"/>
</dbReference>
<dbReference type="PIR" id="E64378">
    <property type="entry name" value="E64378"/>
</dbReference>
<dbReference type="RefSeq" id="WP_010870134.1">
    <property type="nucleotide sequence ID" value="NC_000909.1"/>
</dbReference>
<dbReference type="SMR" id="Q58046"/>
<dbReference type="STRING" id="243232.MJ_0629"/>
<dbReference type="PaxDb" id="243232-MJ_0629"/>
<dbReference type="EnsemblBacteria" id="AAB98621">
    <property type="protein sequence ID" value="AAB98621"/>
    <property type="gene ID" value="MJ_0629"/>
</dbReference>
<dbReference type="GeneID" id="1451495"/>
<dbReference type="KEGG" id="mja:MJ_0629"/>
<dbReference type="eggNOG" id="arCOG02640">
    <property type="taxonomic scope" value="Archaea"/>
</dbReference>
<dbReference type="HOGENOM" id="CLU_104916_1_1_2"/>
<dbReference type="InParanoid" id="Q58046"/>
<dbReference type="Proteomes" id="UP000000805">
    <property type="component" value="Chromosome"/>
</dbReference>
<dbReference type="Gene3D" id="1.20.58.220">
    <property type="entry name" value="Phosphate transport system protein phou homolog 2, domain 2"/>
    <property type="match status" value="1"/>
</dbReference>
<dbReference type="InterPro" id="IPR002727">
    <property type="entry name" value="DUF47"/>
</dbReference>
<dbReference type="InterPro" id="IPR038078">
    <property type="entry name" value="PhoU-like_sf"/>
</dbReference>
<dbReference type="InterPro" id="IPR018445">
    <property type="entry name" value="Put_Phosphate_transp_reg"/>
</dbReference>
<dbReference type="NCBIfam" id="TIGR00153">
    <property type="entry name" value="TIGR00153 family protein"/>
    <property type="match status" value="1"/>
</dbReference>
<dbReference type="PANTHER" id="PTHR36536">
    <property type="entry name" value="UPF0111 PROTEIN HI_1603"/>
    <property type="match status" value="1"/>
</dbReference>
<dbReference type="PANTHER" id="PTHR36536:SF3">
    <property type="entry name" value="UPF0111 PROTEIN HI_1603"/>
    <property type="match status" value="1"/>
</dbReference>
<dbReference type="Pfam" id="PF01865">
    <property type="entry name" value="PhoU_div"/>
    <property type="match status" value="1"/>
</dbReference>
<reference key="1">
    <citation type="journal article" date="1996" name="Science">
        <title>Complete genome sequence of the methanogenic archaeon, Methanococcus jannaschii.</title>
        <authorList>
            <person name="Bult C.J."/>
            <person name="White O."/>
            <person name="Olsen G.J."/>
            <person name="Zhou L."/>
            <person name="Fleischmann R.D."/>
            <person name="Sutton G.G."/>
            <person name="Blake J.A."/>
            <person name="FitzGerald L.M."/>
            <person name="Clayton R.A."/>
            <person name="Gocayne J.D."/>
            <person name="Kerlavage A.R."/>
            <person name="Dougherty B.A."/>
            <person name="Tomb J.-F."/>
            <person name="Adams M.D."/>
            <person name="Reich C.I."/>
            <person name="Overbeek R."/>
            <person name="Kirkness E.F."/>
            <person name="Weinstock K.G."/>
            <person name="Merrick J.M."/>
            <person name="Glodek A."/>
            <person name="Scott J.L."/>
            <person name="Geoghagen N.S.M."/>
            <person name="Weidman J.F."/>
            <person name="Fuhrmann J.L."/>
            <person name="Nguyen D."/>
            <person name="Utterback T.R."/>
            <person name="Kelley J.M."/>
            <person name="Peterson J.D."/>
            <person name="Sadow P.W."/>
            <person name="Hanna M.C."/>
            <person name="Cotton M.D."/>
            <person name="Roberts K.M."/>
            <person name="Hurst M.A."/>
            <person name="Kaine B.P."/>
            <person name="Borodovsky M."/>
            <person name="Klenk H.-P."/>
            <person name="Fraser C.M."/>
            <person name="Smith H.O."/>
            <person name="Woese C.R."/>
            <person name="Venter J.C."/>
        </authorList>
    </citation>
    <scope>NUCLEOTIDE SEQUENCE [LARGE SCALE GENOMIC DNA]</scope>
    <source>
        <strain>ATCC 43067 / DSM 2661 / JAL-1 / JCM 10045 / NBRC 100440</strain>
    </source>
</reference>
<evidence type="ECO:0000305" key="1"/>
<protein>
    <recommendedName>
        <fullName>UPF0111 protein MJ0629</fullName>
    </recommendedName>
</protein>
<keyword id="KW-1185">Reference proteome</keyword>
<organism>
    <name type="scientific">Methanocaldococcus jannaschii (strain ATCC 43067 / DSM 2661 / JAL-1 / JCM 10045 / NBRC 100440)</name>
    <name type="common">Methanococcus jannaschii</name>
    <dbReference type="NCBI Taxonomy" id="243232"/>
    <lineage>
        <taxon>Archaea</taxon>
        <taxon>Methanobacteriati</taxon>
        <taxon>Methanobacteriota</taxon>
        <taxon>Methanomada group</taxon>
        <taxon>Methanococci</taxon>
        <taxon>Methanococcales</taxon>
        <taxon>Methanocaldococcaceae</taxon>
        <taxon>Methanocaldococcus</taxon>
    </lineage>
</organism>
<accession>Q58046</accession>
<name>Y629_METJA</name>
<proteinExistence type="inferred from homology"/>